<keyword id="KW-0325">Glycoprotein</keyword>
<keyword id="KW-1048">Host nucleus</keyword>
<keyword id="KW-0964">Secreted</keyword>
<keyword id="KW-0732">Signal</keyword>
<keyword id="KW-0843">Virulence</keyword>
<accession>P0CV20</accession>
<feature type="signal peptide" evidence="1">
    <location>
        <begin position="1"/>
        <end position="19"/>
    </location>
</feature>
<feature type="chain" id="PRO_0000447929" description="Secreted RxLR effector protein 69">
    <location>
        <begin position="20"/>
        <end position="141"/>
    </location>
</feature>
<feature type="short sequence motif" description="RxLR-dEER" evidence="6">
    <location>
        <begin position="38"/>
        <end position="53"/>
    </location>
</feature>
<feature type="glycosylation site" description="N-linked (GlcNAc...) asparagine" evidence="2">
    <location>
        <position position="120"/>
    </location>
</feature>
<organism>
    <name type="scientific">Plasmopara viticola</name>
    <name type="common">Downy mildew of grapevine</name>
    <name type="synonym">Botrytis viticola</name>
    <dbReference type="NCBI Taxonomy" id="143451"/>
    <lineage>
        <taxon>Eukaryota</taxon>
        <taxon>Sar</taxon>
        <taxon>Stramenopiles</taxon>
        <taxon>Oomycota</taxon>
        <taxon>Peronosporales</taxon>
        <taxon>Peronosporaceae</taxon>
        <taxon>Plasmopara</taxon>
    </lineage>
</organism>
<reference key="1">
    <citation type="journal article" date="2018" name="Front. Plant Sci.">
        <title>In planta functional analysis and subcellular localization of the oomycete pathogen Plasmopara viticola candidate RXLR effector repertoire.</title>
        <authorList>
            <person name="Liu Y."/>
            <person name="Lan X."/>
            <person name="Song S."/>
            <person name="Yin L."/>
            <person name="Dry I.B."/>
            <person name="Qu J."/>
            <person name="Xiang J."/>
            <person name="Lu J."/>
        </authorList>
    </citation>
    <scope>NUCLEOTIDE SEQUENCE [MRNA]</scope>
    <scope>DOMAIN</scope>
    <scope>FUNCTION</scope>
    <scope>SUBCELLULAR LOCATION</scope>
</reference>
<name>RLR69_PLAVT</name>
<comment type="function">
    <text evidence="3">Secreted effector that completely suppresses the host cell death induced by cell death-inducing proteins.</text>
</comment>
<comment type="subcellular location">
    <subcellularLocation>
        <location evidence="3">Secreted</location>
    </subcellularLocation>
    <subcellularLocation>
        <location evidence="3">Host nucleus</location>
    </subcellularLocation>
</comment>
<comment type="domain">
    <text evidence="6">The RxLR-dEER motif acts to carry the protein into the host cell cytoplasm through binding to cell surface phosphatidylinositol-3-phosphate.</text>
</comment>
<comment type="similarity">
    <text evidence="5">Belongs to the RxLR effector family.</text>
</comment>
<evidence type="ECO:0000255" key="1"/>
<evidence type="ECO:0000255" key="2">
    <source>
        <dbReference type="PROSITE-ProRule" id="PRU00498"/>
    </source>
</evidence>
<evidence type="ECO:0000269" key="3">
    <source>
    </source>
</evidence>
<evidence type="ECO:0000303" key="4">
    <source>
    </source>
</evidence>
<evidence type="ECO:0000305" key="5"/>
<evidence type="ECO:0000305" key="6">
    <source>
    </source>
</evidence>
<proteinExistence type="evidence at transcript level"/>
<protein>
    <recommendedName>
        <fullName evidence="4">Secreted RxLR effector protein 69</fullName>
    </recommendedName>
</protein>
<gene>
    <name evidence="4" type="primary">RXLR69</name>
</gene>
<dbReference type="GlyCosmos" id="P0CV20">
    <property type="glycosylation" value="1 site, No reported glycans"/>
</dbReference>
<dbReference type="GO" id="GO:0005576">
    <property type="term" value="C:extracellular region"/>
    <property type="evidence" value="ECO:0007669"/>
    <property type="project" value="UniProtKB-SubCell"/>
</dbReference>
<dbReference type="GO" id="GO:0042025">
    <property type="term" value="C:host cell nucleus"/>
    <property type="evidence" value="ECO:0007669"/>
    <property type="project" value="UniProtKB-SubCell"/>
</dbReference>
<sequence length="141" mass="16908">MHSSTILFVLGAAILAVNGVTTALIDDEVDKGTQEKHRLLRSNLMKHETGEERFELPAWFIGSKAYKQRKRERYEQAKRYYYTLVQDKNHDETFRELDTKRKTLKSALKFIAWNYKGFSNYTKRRIRKKYTAYRIKNPRPW</sequence>